<name>ATG8F_ARATH</name>
<sequence length="121" mass="13762">MAKSSFKQEHDLEKRRAEAARIREKYPDRIPVIVEKAEKSDIPTIDKKKYLVPADLTVGQFVYVIRKRIKLSAEKAIFIFVDNVLPPAGALMSSVYEEKKDDDGFLYVTYSGENTFGFGSP</sequence>
<comment type="function">
    <text evidence="1">Ubiquitin-like modifier involved in autophagosomes formation. May mediate the delivery of the autophagosomes to the vacuole via the microtubule cytoskeleton.</text>
</comment>
<comment type="subunit">
    <text evidence="4 7 8 9">Interacts with ATG4 (By similarity). Interacts with NBR1 (PubMed:21606687). Interacts with ATI1 and ATI2 (PubMed:22253227). Interacts with SH3P2 (PubMed:24249832).</text>
</comment>
<comment type="subcellular location">
    <subcellularLocation>
        <location evidence="6">Cytoplasmic vesicle</location>
        <location evidence="6">Autophagosome membrane</location>
        <topology evidence="6">Lipid-anchor</topology>
    </subcellularLocation>
    <subcellularLocation>
        <location evidence="6">Vacuole membrane</location>
        <topology evidence="6">Lipid-anchor</topology>
    </subcellularLocation>
    <subcellularLocation>
        <location evidence="3">Cytoplasm</location>
        <location evidence="3">Cytoskeleton</location>
    </subcellularLocation>
</comment>
<comment type="tissue specificity">
    <text evidence="5">Constitutively expressed.</text>
</comment>
<comment type="PTM">
    <text evidence="1">The C-terminal 4 residues are removed by ATG4 to expose Gly-117 at the C-terminus. This Gly-117 forms then a thioester bond with the 'Cys-558' of ATG7 (E1-like activating enzyme) before being transferred to the 'Cys-258' of ATG3 (the specific E2 conjugating enzyme), in order to be finally amidated with phosphatidylethanolamine. This lipid modification anchors ATG8 to autophagosomes.</text>
</comment>
<comment type="similarity">
    <text evidence="10">Belongs to the ATG8 family.</text>
</comment>
<comment type="sequence caution" evidence="10">
    <conflict type="erroneous gene model prediction">
        <sequence resource="EMBL-CDS" id="CAB10428"/>
    </conflict>
</comment>
<comment type="sequence caution" evidence="10">
    <conflict type="erroneous gene model prediction">
        <sequence resource="EMBL-CDS" id="CAB78694"/>
    </conflict>
</comment>
<proteinExistence type="evidence at protein level"/>
<accession>Q8VYK7</accession>
<accession>O23496</accession>
<protein>
    <recommendedName>
        <fullName>Autophagy-related protein 8f</fullName>
    </recommendedName>
    <alternativeName>
        <fullName>Autophagy-related ubiquitin-like modifier ATG8f</fullName>
        <shortName>AtAPG8f</shortName>
        <shortName>Protein autophagy 8f</shortName>
    </alternativeName>
</protein>
<evidence type="ECO:0000250" key="1">
    <source>
        <dbReference type="UniProtKB" id="P38182"/>
    </source>
</evidence>
<evidence type="ECO:0000250" key="2">
    <source>
        <dbReference type="UniProtKB" id="Q2XPP5"/>
    </source>
</evidence>
<evidence type="ECO:0000250" key="3">
    <source>
        <dbReference type="UniProtKB" id="Q8LEM4"/>
    </source>
</evidence>
<evidence type="ECO:0000250" key="4">
    <source>
        <dbReference type="UniProtKB" id="Q9SL04"/>
    </source>
</evidence>
<evidence type="ECO:0000269" key="5">
    <source>
    </source>
</evidence>
<evidence type="ECO:0000269" key="6">
    <source>
    </source>
</evidence>
<evidence type="ECO:0000269" key="7">
    <source>
    </source>
</evidence>
<evidence type="ECO:0000269" key="8">
    <source>
    </source>
</evidence>
<evidence type="ECO:0000269" key="9">
    <source>
    </source>
</evidence>
<evidence type="ECO:0000305" key="10"/>
<evidence type="ECO:0007829" key="11">
    <source>
        <dbReference type="PDB" id="7DHT"/>
    </source>
</evidence>
<gene>
    <name type="primary">ATG8F</name>
    <name type="synonym">APG8F</name>
    <name type="ordered locus">At4g16520</name>
    <name type="ORF">dl4285c</name>
    <name type="ORF">FCAALL.383</name>
</gene>
<reference key="1">
    <citation type="journal article" date="2002" name="Plant Physiol.">
        <title>Leaf senescence and starvation-induced chlorosis are accelerated by the disruption of an Arabidopsis autophagy gene.</title>
        <authorList>
            <person name="Hanaoka H."/>
            <person name="Noda T."/>
            <person name="Shirano Y."/>
            <person name="Kato T."/>
            <person name="Hayashi H."/>
            <person name="Shibata D."/>
            <person name="Tabata S."/>
            <person name="Ohsumi Y."/>
        </authorList>
    </citation>
    <scope>NUCLEOTIDE SEQUENCE [MRNA]</scope>
    <scope>NOMENCLATURE</scope>
    <scope>GENE FAMILY</scope>
</reference>
<reference key="2">
    <citation type="journal article" date="1998" name="Nature">
        <title>Analysis of 1.9 Mb of contiguous sequence from chromosome 4 of Arabidopsis thaliana.</title>
        <authorList>
            <person name="Bevan M."/>
            <person name="Bancroft I."/>
            <person name="Bent E."/>
            <person name="Love K."/>
            <person name="Goodman H.M."/>
            <person name="Dean C."/>
            <person name="Bergkamp R."/>
            <person name="Dirkse W."/>
            <person name="van Staveren M."/>
            <person name="Stiekema W."/>
            <person name="Drost L."/>
            <person name="Ridley P."/>
            <person name="Hudson S.-A."/>
            <person name="Patel K."/>
            <person name="Murphy G."/>
            <person name="Piffanelli P."/>
            <person name="Wedler H."/>
            <person name="Wedler E."/>
            <person name="Wambutt R."/>
            <person name="Weitzenegger T."/>
            <person name="Pohl T."/>
            <person name="Terryn N."/>
            <person name="Gielen J."/>
            <person name="Villarroel R."/>
            <person name="De Clercq R."/>
            <person name="van Montagu M."/>
            <person name="Lecharny A."/>
            <person name="Aubourg S."/>
            <person name="Gy I."/>
            <person name="Kreis M."/>
            <person name="Lao N."/>
            <person name="Kavanagh T."/>
            <person name="Hempel S."/>
            <person name="Kotter P."/>
            <person name="Entian K.-D."/>
            <person name="Rieger M."/>
            <person name="Schaefer M."/>
            <person name="Funk B."/>
            <person name="Mueller-Auer S."/>
            <person name="Silvey M."/>
            <person name="James R."/>
            <person name="Monfort A."/>
            <person name="Pons A."/>
            <person name="Puigdomenech P."/>
            <person name="Douka A."/>
            <person name="Voukelatou E."/>
            <person name="Milioni D."/>
            <person name="Hatzopoulos P."/>
            <person name="Piravandi E."/>
            <person name="Obermaier B."/>
            <person name="Hilbert H."/>
            <person name="Duesterhoeft A."/>
            <person name="Moores T."/>
            <person name="Jones J.D.G."/>
            <person name="Eneva T."/>
            <person name="Palme K."/>
            <person name="Benes V."/>
            <person name="Rechmann S."/>
            <person name="Ansorge W."/>
            <person name="Cooke R."/>
            <person name="Berger C."/>
            <person name="Delseny M."/>
            <person name="Voet M."/>
            <person name="Volckaert G."/>
            <person name="Mewes H.-W."/>
            <person name="Klosterman S."/>
            <person name="Schueller C."/>
            <person name="Chalwatzis N."/>
        </authorList>
    </citation>
    <scope>NUCLEOTIDE SEQUENCE [LARGE SCALE GENOMIC DNA]</scope>
    <source>
        <strain>cv. Columbia</strain>
    </source>
</reference>
<reference key="3">
    <citation type="journal article" date="1999" name="Nature">
        <title>Sequence and analysis of chromosome 4 of the plant Arabidopsis thaliana.</title>
        <authorList>
            <person name="Mayer K.F.X."/>
            <person name="Schueller C."/>
            <person name="Wambutt R."/>
            <person name="Murphy G."/>
            <person name="Volckaert G."/>
            <person name="Pohl T."/>
            <person name="Duesterhoeft A."/>
            <person name="Stiekema W."/>
            <person name="Entian K.-D."/>
            <person name="Terryn N."/>
            <person name="Harris B."/>
            <person name="Ansorge W."/>
            <person name="Brandt P."/>
            <person name="Grivell L.A."/>
            <person name="Rieger M."/>
            <person name="Weichselgartner M."/>
            <person name="de Simone V."/>
            <person name="Obermaier B."/>
            <person name="Mache R."/>
            <person name="Mueller M."/>
            <person name="Kreis M."/>
            <person name="Delseny M."/>
            <person name="Puigdomenech P."/>
            <person name="Watson M."/>
            <person name="Schmidtheini T."/>
            <person name="Reichert B."/>
            <person name="Portetelle D."/>
            <person name="Perez-Alonso M."/>
            <person name="Boutry M."/>
            <person name="Bancroft I."/>
            <person name="Vos P."/>
            <person name="Hoheisel J."/>
            <person name="Zimmermann W."/>
            <person name="Wedler H."/>
            <person name="Ridley P."/>
            <person name="Langham S.-A."/>
            <person name="McCullagh B."/>
            <person name="Bilham L."/>
            <person name="Robben J."/>
            <person name="van der Schueren J."/>
            <person name="Grymonprez B."/>
            <person name="Chuang Y.-J."/>
            <person name="Vandenbussche F."/>
            <person name="Braeken M."/>
            <person name="Weltjens I."/>
            <person name="Voet M."/>
            <person name="Bastiaens I."/>
            <person name="Aert R."/>
            <person name="Defoor E."/>
            <person name="Weitzenegger T."/>
            <person name="Bothe G."/>
            <person name="Ramsperger U."/>
            <person name="Hilbert H."/>
            <person name="Braun M."/>
            <person name="Holzer E."/>
            <person name="Brandt A."/>
            <person name="Peters S."/>
            <person name="van Staveren M."/>
            <person name="Dirkse W."/>
            <person name="Mooijman P."/>
            <person name="Klein Lankhorst R."/>
            <person name="Rose M."/>
            <person name="Hauf J."/>
            <person name="Koetter P."/>
            <person name="Berneiser S."/>
            <person name="Hempel S."/>
            <person name="Feldpausch M."/>
            <person name="Lamberth S."/>
            <person name="Van den Daele H."/>
            <person name="De Keyser A."/>
            <person name="Buysshaert C."/>
            <person name="Gielen J."/>
            <person name="Villarroel R."/>
            <person name="De Clercq R."/>
            <person name="van Montagu M."/>
            <person name="Rogers J."/>
            <person name="Cronin A."/>
            <person name="Quail M.A."/>
            <person name="Bray-Allen S."/>
            <person name="Clark L."/>
            <person name="Doggett J."/>
            <person name="Hall S."/>
            <person name="Kay M."/>
            <person name="Lennard N."/>
            <person name="McLay K."/>
            <person name="Mayes R."/>
            <person name="Pettett A."/>
            <person name="Rajandream M.A."/>
            <person name="Lyne M."/>
            <person name="Benes V."/>
            <person name="Rechmann S."/>
            <person name="Borkova D."/>
            <person name="Bloecker H."/>
            <person name="Scharfe M."/>
            <person name="Grimm M."/>
            <person name="Loehnert T.-H."/>
            <person name="Dose S."/>
            <person name="de Haan M."/>
            <person name="Maarse A.C."/>
            <person name="Schaefer M."/>
            <person name="Mueller-Auer S."/>
            <person name="Gabel C."/>
            <person name="Fuchs M."/>
            <person name="Fartmann B."/>
            <person name="Granderath K."/>
            <person name="Dauner D."/>
            <person name="Herzl A."/>
            <person name="Neumann S."/>
            <person name="Argiriou A."/>
            <person name="Vitale D."/>
            <person name="Liguori R."/>
            <person name="Piravandi E."/>
            <person name="Massenet O."/>
            <person name="Quigley F."/>
            <person name="Clabauld G."/>
            <person name="Muendlein A."/>
            <person name="Felber R."/>
            <person name="Schnabl S."/>
            <person name="Hiller R."/>
            <person name="Schmidt W."/>
            <person name="Lecharny A."/>
            <person name="Aubourg S."/>
            <person name="Chefdor F."/>
            <person name="Cooke R."/>
            <person name="Berger C."/>
            <person name="Monfort A."/>
            <person name="Casacuberta E."/>
            <person name="Gibbons T."/>
            <person name="Weber N."/>
            <person name="Vandenbol M."/>
            <person name="Bargues M."/>
            <person name="Terol J."/>
            <person name="Torres A."/>
            <person name="Perez-Perez A."/>
            <person name="Purnelle B."/>
            <person name="Bent E."/>
            <person name="Johnson S."/>
            <person name="Tacon D."/>
            <person name="Jesse T."/>
            <person name="Heijnen L."/>
            <person name="Schwarz S."/>
            <person name="Scholler P."/>
            <person name="Heber S."/>
            <person name="Francs P."/>
            <person name="Bielke C."/>
            <person name="Frishman D."/>
            <person name="Haase D."/>
            <person name="Lemcke K."/>
            <person name="Mewes H.-W."/>
            <person name="Stocker S."/>
            <person name="Zaccaria P."/>
            <person name="Bevan M."/>
            <person name="Wilson R.K."/>
            <person name="de la Bastide M."/>
            <person name="Habermann K."/>
            <person name="Parnell L."/>
            <person name="Dedhia N."/>
            <person name="Gnoj L."/>
            <person name="Schutz K."/>
            <person name="Huang E."/>
            <person name="Spiegel L."/>
            <person name="Sekhon M."/>
            <person name="Murray J."/>
            <person name="Sheet P."/>
            <person name="Cordes M."/>
            <person name="Abu-Threideh J."/>
            <person name="Stoneking T."/>
            <person name="Kalicki J."/>
            <person name="Graves T."/>
            <person name="Harmon G."/>
            <person name="Edwards J."/>
            <person name="Latreille P."/>
            <person name="Courtney L."/>
            <person name="Cloud J."/>
            <person name="Abbott A."/>
            <person name="Scott K."/>
            <person name="Johnson D."/>
            <person name="Minx P."/>
            <person name="Bentley D."/>
            <person name="Fulton B."/>
            <person name="Miller N."/>
            <person name="Greco T."/>
            <person name="Kemp K."/>
            <person name="Kramer J."/>
            <person name="Fulton L."/>
            <person name="Mardis E."/>
            <person name="Dante M."/>
            <person name="Pepin K."/>
            <person name="Hillier L.W."/>
            <person name="Nelson J."/>
            <person name="Spieth J."/>
            <person name="Ryan E."/>
            <person name="Andrews S."/>
            <person name="Geisel C."/>
            <person name="Layman D."/>
            <person name="Du H."/>
            <person name="Ali J."/>
            <person name="Berghoff A."/>
            <person name="Jones K."/>
            <person name="Drone K."/>
            <person name="Cotton M."/>
            <person name="Joshu C."/>
            <person name="Antonoiu B."/>
            <person name="Zidanic M."/>
            <person name="Strong C."/>
            <person name="Sun H."/>
            <person name="Lamar B."/>
            <person name="Yordan C."/>
            <person name="Ma P."/>
            <person name="Zhong J."/>
            <person name="Preston R."/>
            <person name="Vil D."/>
            <person name="Shekher M."/>
            <person name="Matero A."/>
            <person name="Shah R."/>
            <person name="Swaby I.K."/>
            <person name="O'Shaughnessy A."/>
            <person name="Rodriguez M."/>
            <person name="Hoffman J."/>
            <person name="Till S."/>
            <person name="Granat S."/>
            <person name="Shohdy N."/>
            <person name="Hasegawa A."/>
            <person name="Hameed A."/>
            <person name="Lodhi M."/>
            <person name="Johnson A."/>
            <person name="Chen E."/>
            <person name="Marra M.A."/>
            <person name="Martienssen R."/>
            <person name="McCombie W.R."/>
        </authorList>
    </citation>
    <scope>NUCLEOTIDE SEQUENCE [LARGE SCALE GENOMIC DNA]</scope>
    <source>
        <strain>cv. Columbia</strain>
    </source>
</reference>
<reference key="4">
    <citation type="journal article" date="2017" name="Plant J.">
        <title>Araport11: a complete reannotation of the Arabidopsis thaliana reference genome.</title>
        <authorList>
            <person name="Cheng C.Y."/>
            <person name="Krishnakumar V."/>
            <person name="Chan A.P."/>
            <person name="Thibaud-Nissen F."/>
            <person name="Schobel S."/>
            <person name="Town C.D."/>
        </authorList>
    </citation>
    <scope>GENOME REANNOTATION</scope>
    <source>
        <strain>cv. Columbia</strain>
    </source>
</reference>
<reference key="5">
    <citation type="journal article" date="2003" name="Science">
        <title>Empirical analysis of transcriptional activity in the Arabidopsis genome.</title>
        <authorList>
            <person name="Yamada K."/>
            <person name="Lim J."/>
            <person name="Dale J.M."/>
            <person name="Chen H."/>
            <person name="Shinn P."/>
            <person name="Palm C.J."/>
            <person name="Southwick A.M."/>
            <person name="Wu H.C."/>
            <person name="Kim C.J."/>
            <person name="Nguyen M."/>
            <person name="Pham P.K."/>
            <person name="Cheuk R.F."/>
            <person name="Karlin-Newmann G."/>
            <person name="Liu S.X."/>
            <person name="Lam B."/>
            <person name="Sakano H."/>
            <person name="Wu T."/>
            <person name="Yu G."/>
            <person name="Miranda M."/>
            <person name="Quach H.L."/>
            <person name="Tripp M."/>
            <person name="Chang C.H."/>
            <person name="Lee J.M."/>
            <person name="Toriumi M.J."/>
            <person name="Chan M.M."/>
            <person name="Tang C.C."/>
            <person name="Onodera C.S."/>
            <person name="Deng J.M."/>
            <person name="Akiyama K."/>
            <person name="Ansari Y."/>
            <person name="Arakawa T."/>
            <person name="Banh J."/>
            <person name="Banno F."/>
            <person name="Bowser L."/>
            <person name="Brooks S.Y."/>
            <person name="Carninci P."/>
            <person name="Chao Q."/>
            <person name="Choy N."/>
            <person name="Enju A."/>
            <person name="Goldsmith A.D."/>
            <person name="Gurjal M."/>
            <person name="Hansen N.F."/>
            <person name="Hayashizaki Y."/>
            <person name="Johnson-Hopson C."/>
            <person name="Hsuan V.W."/>
            <person name="Iida K."/>
            <person name="Karnes M."/>
            <person name="Khan S."/>
            <person name="Koesema E."/>
            <person name="Ishida J."/>
            <person name="Jiang P.X."/>
            <person name="Jones T."/>
            <person name="Kawai J."/>
            <person name="Kamiya A."/>
            <person name="Meyers C."/>
            <person name="Nakajima M."/>
            <person name="Narusaka M."/>
            <person name="Seki M."/>
            <person name="Sakurai T."/>
            <person name="Satou M."/>
            <person name="Tamse R."/>
            <person name="Vaysberg M."/>
            <person name="Wallender E.K."/>
            <person name="Wong C."/>
            <person name="Yamamura Y."/>
            <person name="Yuan S."/>
            <person name="Shinozaki K."/>
            <person name="Davis R.W."/>
            <person name="Theologis A."/>
            <person name="Ecker J.R."/>
        </authorList>
    </citation>
    <scope>NUCLEOTIDE SEQUENCE [LARGE SCALE MRNA]</scope>
    <source>
        <strain>cv. Columbia</strain>
    </source>
</reference>
<reference key="6">
    <citation type="journal article" date="2004" name="Plant Cell">
        <title>Processing of ATG8s, ubiquitin-like proteins, and their deconjugation by ATG4s are essential for plant autophagy.</title>
        <authorList>
            <person name="Yoshimoto K."/>
            <person name="Hanaoka H."/>
            <person name="Sato S."/>
            <person name="Kato T."/>
            <person name="Tabata S."/>
            <person name="Noda T."/>
            <person name="Ohsumi Y."/>
        </authorList>
    </citation>
    <scope>TISSUE SPECIFICITY</scope>
</reference>
<reference key="7">
    <citation type="journal article" date="2005" name="J. Exp. Bot.">
        <title>The autophagy-associated Atg8 gene family operates both under favourable growth conditions and under starvation stresses in Arabidopsis plants.</title>
        <authorList>
            <person name="Slavikova S."/>
            <person name="Shy G."/>
            <person name="Yao Y."/>
            <person name="Glozman R."/>
            <person name="Levanony H."/>
            <person name="Pietrokovski S."/>
            <person name="Elazar Z."/>
            <person name="Galili G."/>
        </authorList>
    </citation>
    <scope>SUBCELLULAR LOCATION</scope>
</reference>
<reference key="8">
    <citation type="journal article" date="2011" name="Autophagy">
        <title>Plant NBR1 is a selective autophagy substrate and a functional hybrid of the mammalian autophagic adapters NBR1 and p62/SQSTM1.</title>
        <authorList>
            <person name="Svenning S."/>
            <person name="Lamark T."/>
            <person name="Krause K."/>
            <person name="Johansen T."/>
        </authorList>
    </citation>
    <scope>INTERACTION WITH NBR1</scope>
</reference>
<reference key="9">
    <citation type="journal article" date="2012" name="Plant Cell">
        <title>A new type of compartment, defined by plant-specific Atg8-interacting proteins, is induced upon exposure of Arabidopsis plants to carbon starvation.</title>
        <authorList>
            <person name="Honig A."/>
            <person name="Avin-Wittenberg T."/>
            <person name="Ufaz S."/>
            <person name="Galili G."/>
        </authorList>
    </citation>
    <scope>INTERACTION WITH ATI1 AND ATI2</scope>
</reference>
<reference key="10">
    <citation type="journal article" date="2013" name="Plant Cell">
        <title>A BAR-domain protein SH3P2, which binds to phosphatidylinositol 3-phosphate and ATG8, regulates autophagosome formation in Arabidopsis.</title>
        <authorList>
            <person name="Zhuang X."/>
            <person name="Wang H."/>
            <person name="Lam S.K."/>
            <person name="Gao C."/>
            <person name="Wang X."/>
            <person name="Cai Y."/>
            <person name="Jiang L."/>
        </authorList>
    </citation>
    <scope>INTERACTION WITH SH3P2</scope>
</reference>
<dbReference type="EMBL" id="AB073180">
    <property type="protein sequence ID" value="BAB88392.1"/>
    <property type="molecule type" value="mRNA"/>
</dbReference>
<dbReference type="EMBL" id="Z97341">
    <property type="protein sequence ID" value="CAB10428.1"/>
    <property type="status" value="ALT_SEQ"/>
    <property type="molecule type" value="Genomic_DNA"/>
</dbReference>
<dbReference type="EMBL" id="AL161544">
    <property type="protein sequence ID" value="CAB78694.1"/>
    <property type="status" value="ALT_SEQ"/>
    <property type="molecule type" value="Genomic_DNA"/>
</dbReference>
<dbReference type="EMBL" id="CP002687">
    <property type="protein sequence ID" value="AEE83764.1"/>
    <property type="molecule type" value="Genomic_DNA"/>
</dbReference>
<dbReference type="EMBL" id="CP002687">
    <property type="protein sequence ID" value="AEE83765.1"/>
    <property type="molecule type" value="Genomic_DNA"/>
</dbReference>
<dbReference type="EMBL" id="AY070464">
    <property type="protein sequence ID" value="AAL49930.1"/>
    <property type="molecule type" value="mRNA"/>
</dbReference>
<dbReference type="EMBL" id="AY091667">
    <property type="protein sequence ID" value="AAM10266.1"/>
    <property type="molecule type" value="mRNA"/>
</dbReference>
<dbReference type="PIR" id="B71432">
    <property type="entry name" value="B71432"/>
</dbReference>
<dbReference type="RefSeq" id="NP_567504.1">
    <property type="nucleotide sequence ID" value="NM_117751.4"/>
</dbReference>
<dbReference type="RefSeq" id="NP_849395.1">
    <property type="nucleotide sequence ID" value="NM_179064.2"/>
</dbReference>
<dbReference type="PDB" id="7DHT">
    <property type="method" value="NMR"/>
    <property type="chains" value="A=1-121"/>
</dbReference>
<dbReference type="PDBsum" id="7DHT"/>
<dbReference type="SMR" id="Q8VYK7"/>
<dbReference type="BioGRID" id="12644">
    <property type="interactions" value="12"/>
</dbReference>
<dbReference type="FunCoup" id="Q8VYK7">
    <property type="interactions" value="2765"/>
</dbReference>
<dbReference type="IntAct" id="Q8VYK7">
    <property type="interactions" value="9"/>
</dbReference>
<dbReference type="STRING" id="3702.Q8VYK7"/>
<dbReference type="PaxDb" id="3702-AT4G16520.2"/>
<dbReference type="ProteomicsDB" id="246621"/>
<dbReference type="EnsemblPlants" id="AT4G16520.1">
    <property type="protein sequence ID" value="AT4G16520.1"/>
    <property type="gene ID" value="AT4G16520"/>
</dbReference>
<dbReference type="EnsemblPlants" id="AT4G16520.2">
    <property type="protein sequence ID" value="AT4G16520.2"/>
    <property type="gene ID" value="AT4G16520"/>
</dbReference>
<dbReference type="GeneID" id="827351"/>
<dbReference type="Gramene" id="AT4G16520.1">
    <property type="protein sequence ID" value="AT4G16520.1"/>
    <property type="gene ID" value="AT4G16520"/>
</dbReference>
<dbReference type="Gramene" id="AT4G16520.2">
    <property type="protein sequence ID" value="AT4G16520.2"/>
    <property type="gene ID" value="AT4G16520"/>
</dbReference>
<dbReference type="KEGG" id="ath:AT4G16520"/>
<dbReference type="Araport" id="AT4G16520"/>
<dbReference type="TAIR" id="AT4G16520">
    <property type="gene designation" value="ATG8F"/>
</dbReference>
<dbReference type="eggNOG" id="KOG1654">
    <property type="taxonomic scope" value="Eukaryota"/>
</dbReference>
<dbReference type="HOGENOM" id="CLU_119276_0_1_1"/>
<dbReference type="InParanoid" id="Q8VYK7"/>
<dbReference type="OMA" id="AVYQEHK"/>
<dbReference type="PhylomeDB" id="Q8VYK7"/>
<dbReference type="PRO" id="PR:Q8VYK7"/>
<dbReference type="Proteomes" id="UP000006548">
    <property type="component" value="Chromosome 4"/>
</dbReference>
<dbReference type="ExpressionAtlas" id="Q8VYK7">
    <property type="expression patterns" value="baseline and differential"/>
</dbReference>
<dbReference type="GO" id="GO:0005776">
    <property type="term" value="C:autophagosome"/>
    <property type="evidence" value="ECO:0000314"/>
    <property type="project" value="TAIR"/>
</dbReference>
<dbReference type="GO" id="GO:0000421">
    <property type="term" value="C:autophagosome membrane"/>
    <property type="evidence" value="ECO:0007669"/>
    <property type="project" value="UniProtKB-SubCell"/>
</dbReference>
<dbReference type="GO" id="GO:0031410">
    <property type="term" value="C:cytoplasmic vesicle"/>
    <property type="evidence" value="ECO:0007669"/>
    <property type="project" value="UniProtKB-KW"/>
</dbReference>
<dbReference type="GO" id="GO:0005874">
    <property type="term" value="C:microtubule"/>
    <property type="evidence" value="ECO:0007669"/>
    <property type="project" value="UniProtKB-KW"/>
</dbReference>
<dbReference type="GO" id="GO:0006914">
    <property type="term" value="P:autophagy"/>
    <property type="evidence" value="ECO:0007669"/>
    <property type="project" value="UniProtKB-KW"/>
</dbReference>
<dbReference type="GO" id="GO:0015031">
    <property type="term" value="P:protein transport"/>
    <property type="evidence" value="ECO:0007669"/>
    <property type="project" value="UniProtKB-KW"/>
</dbReference>
<dbReference type="CDD" id="cd16128">
    <property type="entry name" value="Ubl_ATG8"/>
    <property type="match status" value="1"/>
</dbReference>
<dbReference type="FunFam" id="3.10.20.90:FF:000010">
    <property type="entry name" value="Autophagy-related protein"/>
    <property type="match status" value="1"/>
</dbReference>
<dbReference type="Gene3D" id="3.10.20.90">
    <property type="entry name" value="Phosphatidylinositol 3-kinase Catalytic Subunit, Chain A, domain 1"/>
    <property type="match status" value="1"/>
</dbReference>
<dbReference type="InterPro" id="IPR004241">
    <property type="entry name" value="Atg8-like"/>
</dbReference>
<dbReference type="InterPro" id="IPR029071">
    <property type="entry name" value="Ubiquitin-like_domsf"/>
</dbReference>
<dbReference type="PANTHER" id="PTHR10969">
    <property type="entry name" value="MICROTUBULE-ASSOCIATED PROTEINS 1A/1B LIGHT CHAIN 3-RELATED"/>
    <property type="match status" value="1"/>
</dbReference>
<dbReference type="Pfam" id="PF02991">
    <property type="entry name" value="ATG8"/>
    <property type="match status" value="1"/>
</dbReference>
<dbReference type="SUPFAM" id="SSF54236">
    <property type="entry name" value="Ubiquitin-like"/>
    <property type="match status" value="1"/>
</dbReference>
<keyword id="KW-0002">3D-structure</keyword>
<keyword id="KW-0072">Autophagy</keyword>
<keyword id="KW-0963">Cytoplasm</keyword>
<keyword id="KW-0968">Cytoplasmic vesicle</keyword>
<keyword id="KW-0206">Cytoskeleton</keyword>
<keyword id="KW-0449">Lipoprotein</keyword>
<keyword id="KW-0472">Membrane</keyword>
<keyword id="KW-0493">Microtubule</keyword>
<keyword id="KW-0653">Protein transport</keyword>
<keyword id="KW-1185">Reference proteome</keyword>
<keyword id="KW-0813">Transport</keyword>
<keyword id="KW-0833">Ubl conjugation pathway</keyword>
<keyword id="KW-0926">Vacuole</keyword>
<organism>
    <name type="scientific">Arabidopsis thaliana</name>
    <name type="common">Mouse-ear cress</name>
    <dbReference type="NCBI Taxonomy" id="3702"/>
    <lineage>
        <taxon>Eukaryota</taxon>
        <taxon>Viridiplantae</taxon>
        <taxon>Streptophyta</taxon>
        <taxon>Embryophyta</taxon>
        <taxon>Tracheophyta</taxon>
        <taxon>Spermatophyta</taxon>
        <taxon>Magnoliopsida</taxon>
        <taxon>eudicotyledons</taxon>
        <taxon>Gunneridae</taxon>
        <taxon>Pentapetalae</taxon>
        <taxon>rosids</taxon>
        <taxon>malvids</taxon>
        <taxon>Brassicales</taxon>
        <taxon>Brassicaceae</taxon>
        <taxon>Camelineae</taxon>
        <taxon>Arabidopsis</taxon>
    </lineage>
</organism>
<feature type="chain" id="PRO_0000286915" description="Autophagy-related protein 8f">
    <location>
        <begin position="1"/>
        <end position="117"/>
    </location>
</feature>
<feature type="propeptide" id="PRO_0000286916" description="Removed in mature form" evidence="2">
    <location>
        <begin position="118"/>
        <end position="121"/>
    </location>
</feature>
<feature type="site" description="Cleavage; by ATG4" evidence="2">
    <location>
        <begin position="117"/>
        <end position="118"/>
    </location>
</feature>
<feature type="lipid moiety-binding region" description="Phosphatidylethanolamine amidated glycine" evidence="1">
    <location>
        <position position="117"/>
    </location>
</feature>
<feature type="turn" evidence="11">
    <location>
        <begin position="6"/>
        <end position="8"/>
    </location>
</feature>
<feature type="helix" evidence="11">
    <location>
        <begin position="12"/>
        <end position="25"/>
    </location>
</feature>
<feature type="strand" evidence="11">
    <location>
        <begin position="29"/>
        <end position="33"/>
    </location>
</feature>
<feature type="strand" evidence="11">
    <location>
        <begin position="50"/>
        <end position="56"/>
    </location>
</feature>
<feature type="helix" evidence="11">
    <location>
        <begin position="58"/>
        <end position="65"/>
    </location>
</feature>
<feature type="strand" evidence="11">
    <location>
        <begin position="81"/>
        <end position="83"/>
    </location>
</feature>
<feature type="strand" evidence="11">
    <location>
        <begin position="88"/>
        <end position="90"/>
    </location>
</feature>
<feature type="helix" evidence="11">
    <location>
        <begin position="92"/>
        <end position="98"/>
    </location>
</feature>
<feature type="strand" evidence="11">
    <location>
        <begin position="102"/>
        <end position="104"/>
    </location>
</feature>
<feature type="strand" evidence="11">
    <location>
        <begin position="113"/>
        <end position="116"/>
    </location>
</feature>